<keyword id="KW-0143">Chaperone</keyword>
<keyword id="KW-0963">Cytoplasm</keyword>
<keyword id="KW-1185">Reference proteome</keyword>
<keyword id="KW-0690">Ribosome biogenesis</keyword>
<keyword id="KW-0698">rRNA processing</keyword>
<accession>A1VM98</accession>
<comment type="function">
    <text evidence="1">An accessory protein needed during the final step in the assembly of 30S ribosomal subunit, possibly for assembly of the head region. Essential for efficient processing of 16S rRNA. May be needed both before and after RbfA during the maturation of 16S rRNA. It has affinity for free ribosomal 30S subunits but not for 70S ribosomes.</text>
</comment>
<comment type="subunit">
    <text evidence="1">Binds ribosomal protein uS19.</text>
</comment>
<comment type="subcellular location">
    <subcellularLocation>
        <location evidence="1">Cytoplasm</location>
    </subcellularLocation>
</comment>
<comment type="domain">
    <text evidence="1">The PRC barrel domain binds ribosomal protein uS19.</text>
</comment>
<comment type="similarity">
    <text evidence="1">Belongs to the RimM family.</text>
</comment>
<name>RIMM_POLNA</name>
<protein>
    <recommendedName>
        <fullName evidence="1">Ribosome maturation factor RimM</fullName>
    </recommendedName>
</protein>
<reference key="1">
    <citation type="journal article" date="2009" name="Environ. Microbiol.">
        <title>The genome of Polaromonas naphthalenivorans strain CJ2, isolated from coal tar-contaminated sediment, reveals physiological and metabolic versatility and evolution through extensive horizontal gene transfer.</title>
        <authorList>
            <person name="Yagi J.M."/>
            <person name="Sims D."/>
            <person name="Brettin T."/>
            <person name="Bruce D."/>
            <person name="Madsen E.L."/>
        </authorList>
    </citation>
    <scope>NUCLEOTIDE SEQUENCE [LARGE SCALE GENOMIC DNA]</scope>
    <source>
        <strain>CJ2</strain>
    </source>
</reference>
<dbReference type="EMBL" id="CP000529">
    <property type="protein sequence ID" value="ABM36776.1"/>
    <property type="molecule type" value="Genomic_DNA"/>
</dbReference>
<dbReference type="RefSeq" id="WP_011800863.1">
    <property type="nucleotide sequence ID" value="NC_008781.1"/>
</dbReference>
<dbReference type="SMR" id="A1VM98"/>
<dbReference type="STRING" id="365044.Pnap_1462"/>
<dbReference type="KEGG" id="pna:Pnap_1462"/>
<dbReference type="eggNOG" id="COG0806">
    <property type="taxonomic scope" value="Bacteria"/>
</dbReference>
<dbReference type="HOGENOM" id="CLU_077636_1_0_4"/>
<dbReference type="OrthoDB" id="9783509at2"/>
<dbReference type="Proteomes" id="UP000000644">
    <property type="component" value="Chromosome"/>
</dbReference>
<dbReference type="GO" id="GO:0005737">
    <property type="term" value="C:cytoplasm"/>
    <property type="evidence" value="ECO:0007669"/>
    <property type="project" value="UniProtKB-SubCell"/>
</dbReference>
<dbReference type="GO" id="GO:0005840">
    <property type="term" value="C:ribosome"/>
    <property type="evidence" value="ECO:0007669"/>
    <property type="project" value="InterPro"/>
</dbReference>
<dbReference type="GO" id="GO:0043022">
    <property type="term" value="F:ribosome binding"/>
    <property type="evidence" value="ECO:0007669"/>
    <property type="project" value="InterPro"/>
</dbReference>
<dbReference type="GO" id="GO:0042274">
    <property type="term" value="P:ribosomal small subunit biogenesis"/>
    <property type="evidence" value="ECO:0007669"/>
    <property type="project" value="UniProtKB-UniRule"/>
</dbReference>
<dbReference type="GO" id="GO:0006364">
    <property type="term" value="P:rRNA processing"/>
    <property type="evidence" value="ECO:0007669"/>
    <property type="project" value="UniProtKB-UniRule"/>
</dbReference>
<dbReference type="Gene3D" id="2.30.30.240">
    <property type="entry name" value="PRC-barrel domain"/>
    <property type="match status" value="1"/>
</dbReference>
<dbReference type="Gene3D" id="2.40.30.60">
    <property type="entry name" value="RimM"/>
    <property type="match status" value="1"/>
</dbReference>
<dbReference type="HAMAP" id="MF_00014">
    <property type="entry name" value="Ribosome_mat_RimM"/>
    <property type="match status" value="1"/>
</dbReference>
<dbReference type="InterPro" id="IPR011033">
    <property type="entry name" value="PRC_barrel-like_sf"/>
</dbReference>
<dbReference type="InterPro" id="IPR056792">
    <property type="entry name" value="PRC_RimM"/>
</dbReference>
<dbReference type="InterPro" id="IPR011961">
    <property type="entry name" value="RimM"/>
</dbReference>
<dbReference type="InterPro" id="IPR002676">
    <property type="entry name" value="RimM_N"/>
</dbReference>
<dbReference type="InterPro" id="IPR036976">
    <property type="entry name" value="RimM_N_sf"/>
</dbReference>
<dbReference type="InterPro" id="IPR009000">
    <property type="entry name" value="Transl_B-barrel_sf"/>
</dbReference>
<dbReference type="NCBIfam" id="TIGR02273">
    <property type="entry name" value="16S_RimM"/>
    <property type="match status" value="1"/>
</dbReference>
<dbReference type="PANTHER" id="PTHR33692">
    <property type="entry name" value="RIBOSOME MATURATION FACTOR RIMM"/>
    <property type="match status" value="1"/>
</dbReference>
<dbReference type="PANTHER" id="PTHR33692:SF1">
    <property type="entry name" value="RIBOSOME MATURATION FACTOR RIMM"/>
    <property type="match status" value="1"/>
</dbReference>
<dbReference type="Pfam" id="PF24986">
    <property type="entry name" value="PRC_RimM"/>
    <property type="match status" value="1"/>
</dbReference>
<dbReference type="Pfam" id="PF01782">
    <property type="entry name" value="RimM"/>
    <property type="match status" value="1"/>
</dbReference>
<dbReference type="SUPFAM" id="SSF50346">
    <property type="entry name" value="PRC-barrel domain"/>
    <property type="match status" value="1"/>
</dbReference>
<dbReference type="SUPFAM" id="SSF50447">
    <property type="entry name" value="Translation proteins"/>
    <property type="match status" value="1"/>
</dbReference>
<evidence type="ECO:0000255" key="1">
    <source>
        <dbReference type="HAMAP-Rule" id="MF_00014"/>
    </source>
</evidence>
<gene>
    <name evidence="1" type="primary">rimM</name>
    <name type="ordered locus">Pnap_1462</name>
</gene>
<sequence>MRPGLQPSLGLTSSSLPDDALEVGRILDAWGVKGWVKILPHSTDPEALFSAKTWYLQTPDVKFRPGFSLFSGTVSLKVDEAKIHSGAVVAKFSGLDDRDAAEALRGARIFLSRSSFPAASADEYYWVDLIGLNVLNREGVALGCVRDLMATGPHSVLCVEYASTQEDGTSATAERMIPFVAAYVDKVDIAGKCITVDWQPDY</sequence>
<proteinExistence type="inferred from homology"/>
<organism>
    <name type="scientific">Polaromonas naphthalenivorans (strain CJ2)</name>
    <dbReference type="NCBI Taxonomy" id="365044"/>
    <lineage>
        <taxon>Bacteria</taxon>
        <taxon>Pseudomonadati</taxon>
        <taxon>Pseudomonadota</taxon>
        <taxon>Betaproteobacteria</taxon>
        <taxon>Burkholderiales</taxon>
        <taxon>Comamonadaceae</taxon>
        <taxon>Polaromonas</taxon>
    </lineage>
</organism>
<feature type="chain" id="PRO_0000351784" description="Ribosome maturation factor RimM">
    <location>
        <begin position="1"/>
        <end position="202"/>
    </location>
</feature>
<feature type="domain" description="PRC barrel" evidence="1">
    <location>
        <begin position="121"/>
        <end position="202"/>
    </location>
</feature>